<protein>
    <recommendedName>
        <fullName evidence="1">Multifunctional CCA protein</fullName>
    </recommendedName>
    <domain>
        <recommendedName>
            <fullName evidence="1">CCA-adding enzyme</fullName>
            <ecNumber evidence="1">2.7.7.72</ecNumber>
        </recommendedName>
        <alternativeName>
            <fullName evidence="1">CCA tRNA nucleotidyltransferase</fullName>
        </alternativeName>
        <alternativeName>
            <fullName evidence="1">tRNA CCA-pyrophosphorylase</fullName>
        </alternativeName>
        <alternativeName>
            <fullName evidence="1">tRNA adenylyl-/cytidylyl-transferase</fullName>
        </alternativeName>
        <alternativeName>
            <fullName evidence="1">tRNA nucleotidyltransferase</fullName>
        </alternativeName>
        <alternativeName>
            <fullName evidence="1">tRNA-NT</fullName>
        </alternativeName>
    </domain>
    <domain>
        <recommendedName>
            <fullName evidence="1">2'-nucleotidase</fullName>
            <ecNumber evidence="1">3.1.3.-</ecNumber>
        </recommendedName>
    </domain>
    <domain>
        <recommendedName>
            <fullName evidence="1">2',3'-cyclic phosphodiesterase</fullName>
            <ecNumber evidence="1">3.1.4.-</ecNumber>
        </recommendedName>
    </domain>
    <domain>
        <recommendedName>
            <fullName evidence="1">Phosphatase</fullName>
            <ecNumber evidence="1">3.1.3.-</ecNumber>
        </recommendedName>
    </domain>
</protein>
<comment type="function">
    <text evidence="1">Catalyzes the addition and repair of the essential 3'-terminal CCA sequence in tRNAs without using a nucleic acid template. Adds these three nucleotides in the order of C, C, and A to the tRNA nucleotide-73, using CTP and ATP as substrates and producing inorganic pyrophosphate. tRNA 3'-terminal CCA addition is required both for tRNA processing and repair. Also involved in tRNA surveillance by mediating tandem CCA addition to generate a CCACCA at the 3' terminus of unstable tRNAs. While stable tRNAs receive only 3'-terminal CCA, unstable tRNAs are marked with CCACCA and rapidly degraded.</text>
</comment>
<comment type="catalytic activity">
    <reaction evidence="1">
        <text>a tRNA precursor + 2 CTP + ATP = a tRNA with a 3' CCA end + 3 diphosphate</text>
        <dbReference type="Rhea" id="RHEA:14433"/>
        <dbReference type="Rhea" id="RHEA-COMP:10465"/>
        <dbReference type="Rhea" id="RHEA-COMP:10468"/>
        <dbReference type="ChEBI" id="CHEBI:30616"/>
        <dbReference type="ChEBI" id="CHEBI:33019"/>
        <dbReference type="ChEBI" id="CHEBI:37563"/>
        <dbReference type="ChEBI" id="CHEBI:74896"/>
        <dbReference type="ChEBI" id="CHEBI:83071"/>
        <dbReference type="EC" id="2.7.7.72"/>
    </reaction>
</comment>
<comment type="catalytic activity">
    <reaction evidence="1">
        <text>a tRNA with a 3' CCA end + 2 CTP + ATP = a tRNA with a 3' CCACCA end + 3 diphosphate</text>
        <dbReference type="Rhea" id="RHEA:76235"/>
        <dbReference type="Rhea" id="RHEA-COMP:10468"/>
        <dbReference type="Rhea" id="RHEA-COMP:18655"/>
        <dbReference type="ChEBI" id="CHEBI:30616"/>
        <dbReference type="ChEBI" id="CHEBI:33019"/>
        <dbReference type="ChEBI" id="CHEBI:37563"/>
        <dbReference type="ChEBI" id="CHEBI:83071"/>
        <dbReference type="ChEBI" id="CHEBI:195187"/>
    </reaction>
    <physiologicalReaction direction="left-to-right" evidence="1">
        <dbReference type="Rhea" id="RHEA:76236"/>
    </physiologicalReaction>
</comment>
<comment type="cofactor">
    <cofactor evidence="1">
        <name>Mg(2+)</name>
        <dbReference type="ChEBI" id="CHEBI:18420"/>
    </cofactor>
    <text evidence="1">Magnesium is required for nucleotidyltransferase activity.</text>
</comment>
<comment type="cofactor">
    <cofactor evidence="1">
        <name>Ni(2+)</name>
        <dbReference type="ChEBI" id="CHEBI:49786"/>
    </cofactor>
    <text evidence="1">Nickel for phosphatase activity.</text>
</comment>
<comment type="subunit">
    <text evidence="1">Monomer. Can also form homodimers and oligomers.</text>
</comment>
<comment type="domain">
    <text evidence="1">Comprises two domains: an N-terminal domain containing the nucleotidyltransferase activity and a C-terminal HD domain associated with both phosphodiesterase and phosphatase activities.</text>
</comment>
<comment type="miscellaneous">
    <text evidence="1">A single active site specifically recognizes both ATP and CTP and is responsible for their addition.</text>
</comment>
<comment type="similarity">
    <text evidence="1">Belongs to the tRNA nucleotidyltransferase/poly(A) polymerase family. Bacterial CCA-adding enzyme type 1 subfamily.</text>
</comment>
<feature type="chain" id="PRO_1000140026" description="Multifunctional CCA protein">
    <location>
        <begin position="1"/>
        <end position="413"/>
    </location>
</feature>
<feature type="domain" description="HD" evidence="1">
    <location>
        <begin position="232"/>
        <end position="333"/>
    </location>
</feature>
<feature type="binding site" evidence="1">
    <location>
        <position position="8"/>
    </location>
    <ligand>
        <name>ATP</name>
        <dbReference type="ChEBI" id="CHEBI:30616"/>
    </ligand>
</feature>
<feature type="binding site" evidence="1">
    <location>
        <position position="8"/>
    </location>
    <ligand>
        <name>CTP</name>
        <dbReference type="ChEBI" id="CHEBI:37563"/>
    </ligand>
</feature>
<feature type="binding site" evidence="1">
    <location>
        <position position="11"/>
    </location>
    <ligand>
        <name>ATP</name>
        <dbReference type="ChEBI" id="CHEBI:30616"/>
    </ligand>
</feature>
<feature type="binding site" evidence="1">
    <location>
        <position position="11"/>
    </location>
    <ligand>
        <name>CTP</name>
        <dbReference type="ChEBI" id="CHEBI:37563"/>
    </ligand>
</feature>
<feature type="binding site" evidence="1">
    <location>
        <position position="21"/>
    </location>
    <ligand>
        <name>Mg(2+)</name>
        <dbReference type="ChEBI" id="CHEBI:18420"/>
    </ligand>
</feature>
<feature type="binding site" evidence="1">
    <location>
        <position position="23"/>
    </location>
    <ligand>
        <name>Mg(2+)</name>
        <dbReference type="ChEBI" id="CHEBI:18420"/>
    </ligand>
</feature>
<feature type="binding site" evidence="1">
    <location>
        <position position="91"/>
    </location>
    <ligand>
        <name>ATP</name>
        <dbReference type="ChEBI" id="CHEBI:30616"/>
    </ligand>
</feature>
<feature type="binding site" evidence="1">
    <location>
        <position position="91"/>
    </location>
    <ligand>
        <name>CTP</name>
        <dbReference type="ChEBI" id="CHEBI:37563"/>
    </ligand>
</feature>
<feature type="binding site" evidence="1">
    <location>
        <position position="143"/>
    </location>
    <ligand>
        <name>ATP</name>
        <dbReference type="ChEBI" id="CHEBI:30616"/>
    </ligand>
</feature>
<feature type="binding site" evidence="1">
    <location>
        <position position="143"/>
    </location>
    <ligand>
        <name>CTP</name>
        <dbReference type="ChEBI" id="CHEBI:37563"/>
    </ligand>
</feature>
<feature type="binding site" evidence="1">
    <location>
        <position position="146"/>
    </location>
    <ligand>
        <name>ATP</name>
        <dbReference type="ChEBI" id="CHEBI:30616"/>
    </ligand>
</feature>
<feature type="binding site" evidence="1">
    <location>
        <position position="146"/>
    </location>
    <ligand>
        <name>CTP</name>
        <dbReference type="ChEBI" id="CHEBI:37563"/>
    </ligand>
</feature>
<accession>A9ABP3</accession>
<reference key="1">
    <citation type="submission" date="2007-10" db="EMBL/GenBank/DDBJ databases">
        <title>Complete sequence of chromosome 1 of Burkholderia multivorans ATCC 17616.</title>
        <authorList>
            <person name="Copeland A."/>
            <person name="Lucas S."/>
            <person name="Lapidus A."/>
            <person name="Barry K."/>
            <person name="Glavina del Rio T."/>
            <person name="Dalin E."/>
            <person name="Tice H."/>
            <person name="Pitluck S."/>
            <person name="Chain P."/>
            <person name="Malfatti S."/>
            <person name="Shin M."/>
            <person name="Vergez L."/>
            <person name="Schmutz J."/>
            <person name="Larimer F."/>
            <person name="Land M."/>
            <person name="Hauser L."/>
            <person name="Kyrpides N."/>
            <person name="Kim E."/>
            <person name="Tiedje J."/>
            <person name="Richardson P."/>
        </authorList>
    </citation>
    <scope>NUCLEOTIDE SEQUENCE [LARGE SCALE GENOMIC DNA]</scope>
    <source>
        <strain>ATCC 17616 / 249</strain>
    </source>
</reference>
<reference key="2">
    <citation type="submission" date="2007-04" db="EMBL/GenBank/DDBJ databases">
        <title>Complete genome sequence of Burkholderia multivorans ATCC 17616.</title>
        <authorList>
            <person name="Ohtsubo Y."/>
            <person name="Yamashita A."/>
            <person name="Kurokawa K."/>
            <person name="Takami H."/>
            <person name="Yuhara S."/>
            <person name="Nishiyama E."/>
            <person name="Endo R."/>
            <person name="Miyazaki R."/>
            <person name="Ono A."/>
            <person name="Yano K."/>
            <person name="Ito M."/>
            <person name="Sota M."/>
            <person name="Yuji N."/>
            <person name="Hattori M."/>
            <person name="Tsuda M."/>
        </authorList>
    </citation>
    <scope>NUCLEOTIDE SEQUENCE [LARGE SCALE GENOMIC DNA]</scope>
    <source>
        <strain>ATCC 17616 / 249</strain>
    </source>
</reference>
<gene>
    <name evidence="1" type="primary">cca</name>
    <name type="ordered locus">Bmul_3026</name>
    <name type="ordered locus">BMULJ_00206</name>
</gene>
<dbReference type="EC" id="2.7.7.72" evidence="1"/>
<dbReference type="EC" id="3.1.3.-" evidence="1"/>
<dbReference type="EC" id="3.1.4.-" evidence="1"/>
<dbReference type="EMBL" id="CP000868">
    <property type="protein sequence ID" value="ABX16710.1"/>
    <property type="molecule type" value="Genomic_DNA"/>
</dbReference>
<dbReference type="EMBL" id="AP009385">
    <property type="protein sequence ID" value="BAG42181.1"/>
    <property type="molecule type" value="Genomic_DNA"/>
</dbReference>
<dbReference type="RefSeq" id="WP_006402749.1">
    <property type="nucleotide sequence ID" value="NC_010804.1"/>
</dbReference>
<dbReference type="SMR" id="A9ABP3"/>
<dbReference type="STRING" id="395019.BMULJ_00206"/>
<dbReference type="KEGG" id="bmj:BMULJ_00206"/>
<dbReference type="KEGG" id="bmu:Bmul_3026"/>
<dbReference type="eggNOG" id="COG0617">
    <property type="taxonomic scope" value="Bacteria"/>
</dbReference>
<dbReference type="HOGENOM" id="CLU_015961_1_1_4"/>
<dbReference type="Proteomes" id="UP000008815">
    <property type="component" value="Chromosome 1"/>
</dbReference>
<dbReference type="GO" id="GO:0005524">
    <property type="term" value="F:ATP binding"/>
    <property type="evidence" value="ECO:0007669"/>
    <property type="project" value="UniProtKB-UniRule"/>
</dbReference>
<dbReference type="GO" id="GO:0004810">
    <property type="term" value="F:CCA tRNA nucleotidyltransferase activity"/>
    <property type="evidence" value="ECO:0007669"/>
    <property type="project" value="UniProtKB-UniRule"/>
</dbReference>
<dbReference type="GO" id="GO:0004112">
    <property type="term" value="F:cyclic-nucleotide phosphodiesterase activity"/>
    <property type="evidence" value="ECO:0007669"/>
    <property type="project" value="UniProtKB-UniRule"/>
</dbReference>
<dbReference type="GO" id="GO:0000287">
    <property type="term" value="F:magnesium ion binding"/>
    <property type="evidence" value="ECO:0007669"/>
    <property type="project" value="UniProtKB-UniRule"/>
</dbReference>
<dbReference type="GO" id="GO:0016791">
    <property type="term" value="F:phosphatase activity"/>
    <property type="evidence" value="ECO:0007669"/>
    <property type="project" value="UniProtKB-UniRule"/>
</dbReference>
<dbReference type="GO" id="GO:0000049">
    <property type="term" value="F:tRNA binding"/>
    <property type="evidence" value="ECO:0007669"/>
    <property type="project" value="UniProtKB-UniRule"/>
</dbReference>
<dbReference type="GO" id="GO:0042245">
    <property type="term" value="P:RNA repair"/>
    <property type="evidence" value="ECO:0007669"/>
    <property type="project" value="UniProtKB-KW"/>
</dbReference>
<dbReference type="GO" id="GO:0001680">
    <property type="term" value="P:tRNA 3'-terminal CCA addition"/>
    <property type="evidence" value="ECO:0007669"/>
    <property type="project" value="UniProtKB-UniRule"/>
</dbReference>
<dbReference type="CDD" id="cd05398">
    <property type="entry name" value="NT_ClassII-CCAase"/>
    <property type="match status" value="1"/>
</dbReference>
<dbReference type="Gene3D" id="3.30.460.10">
    <property type="entry name" value="Beta Polymerase, domain 2"/>
    <property type="match status" value="1"/>
</dbReference>
<dbReference type="Gene3D" id="1.10.3090.10">
    <property type="entry name" value="cca-adding enzyme, domain 2"/>
    <property type="match status" value="1"/>
</dbReference>
<dbReference type="HAMAP" id="MF_01261">
    <property type="entry name" value="CCA_bact_type1"/>
    <property type="match status" value="1"/>
</dbReference>
<dbReference type="HAMAP" id="MF_01262">
    <property type="entry name" value="CCA_bact_type2"/>
    <property type="match status" value="1"/>
</dbReference>
<dbReference type="InterPro" id="IPR012006">
    <property type="entry name" value="CCA_bact"/>
</dbReference>
<dbReference type="InterPro" id="IPR006674">
    <property type="entry name" value="HD_domain"/>
</dbReference>
<dbReference type="InterPro" id="IPR043519">
    <property type="entry name" value="NT_sf"/>
</dbReference>
<dbReference type="InterPro" id="IPR002646">
    <property type="entry name" value="PolA_pol_head_dom"/>
</dbReference>
<dbReference type="InterPro" id="IPR032828">
    <property type="entry name" value="PolyA_RNA-bd"/>
</dbReference>
<dbReference type="InterPro" id="IPR050124">
    <property type="entry name" value="tRNA_CCA-adding_enzyme"/>
</dbReference>
<dbReference type="NCBIfam" id="NF008137">
    <property type="entry name" value="PRK10885.1"/>
    <property type="match status" value="1"/>
</dbReference>
<dbReference type="PANTHER" id="PTHR47545">
    <property type="entry name" value="MULTIFUNCTIONAL CCA PROTEIN"/>
    <property type="match status" value="1"/>
</dbReference>
<dbReference type="PANTHER" id="PTHR47545:SF1">
    <property type="entry name" value="MULTIFUNCTIONAL CCA PROTEIN"/>
    <property type="match status" value="1"/>
</dbReference>
<dbReference type="Pfam" id="PF01966">
    <property type="entry name" value="HD"/>
    <property type="match status" value="1"/>
</dbReference>
<dbReference type="Pfam" id="PF01743">
    <property type="entry name" value="PolyA_pol"/>
    <property type="match status" value="1"/>
</dbReference>
<dbReference type="Pfam" id="PF12627">
    <property type="entry name" value="PolyA_pol_RNAbd"/>
    <property type="match status" value="1"/>
</dbReference>
<dbReference type="PIRSF" id="PIRSF000813">
    <property type="entry name" value="CCA_bact"/>
    <property type="match status" value="1"/>
</dbReference>
<dbReference type="SUPFAM" id="SSF81301">
    <property type="entry name" value="Nucleotidyltransferase"/>
    <property type="match status" value="1"/>
</dbReference>
<dbReference type="SUPFAM" id="SSF81891">
    <property type="entry name" value="Poly A polymerase C-terminal region-like"/>
    <property type="match status" value="1"/>
</dbReference>
<dbReference type="PROSITE" id="PS51831">
    <property type="entry name" value="HD"/>
    <property type="match status" value="1"/>
</dbReference>
<keyword id="KW-0067">ATP-binding</keyword>
<keyword id="KW-0378">Hydrolase</keyword>
<keyword id="KW-0460">Magnesium</keyword>
<keyword id="KW-0479">Metal-binding</keyword>
<keyword id="KW-0511">Multifunctional enzyme</keyword>
<keyword id="KW-0533">Nickel</keyword>
<keyword id="KW-0547">Nucleotide-binding</keyword>
<keyword id="KW-0548">Nucleotidyltransferase</keyword>
<keyword id="KW-1185">Reference proteome</keyword>
<keyword id="KW-0692">RNA repair</keyword>
<keyword id="KW-0694">RNA-binding</keyword>
<keyword id="KW-0808">Transferase</keyword>
<keyword id="KW-0819">tRNA processing</keyword>
<organism>
    <name type="scientific">Burkholderia multivorans (strain ATCC 17616 / 249)</name>
    <dbReference type="NCBI Taxonomy" id="395019"/>
    <lineage>
        <taxon>Bacteria</taxon>
        <taxon>Pseudomonadati</taxon>
        <taxon>Pseudomonadota</taxon>
        <taxon>Betaproteobacteria</taxon>
        <taxon>Burkholderiales</taxon>
        <taxon>Burkholderiaceae</taxon>
        <taxon>Burkholderia</taxon>
        <taxon>Burkholderia cepacia complex</taxon>
    </lineage>
</organism>
<name>CCA_BURM1</name>
<sequence>MNIYAVGGAIRDELLGVPVQDRDYVVVGATPEQMIAQGFRPVGKDFPVFLHPDTHEEYALARTERKTAAGYHGFQFHYAPDVTLDEDLARRDLTINAMAREVSPDGTLIGPVIDPFDGQRDLRARVFRHVSDAFVEDPVRILRLARFAARFADFTVADDTLALMRRMVDAGEVDALVPERVWQELARGLMEAKPSRMFAVLRDCGALARILPEVDGLWGVPQRADYHPEVDTGVHVMMVVDYAAKQRYSLPVRFAALTHDLGKATTPDDVLPRHTGHEGRSVDLLKPLCERLRVPNECRDLALVVAREHGNLHRVMEMGAAALVRFFERTDALRKPARFAEMLQACEADARGRLGLEAQPYPQAERLRVALAAARSVDAGAIARATGSDSAKIKDAVHRARIEAVAHALEIGE</sequence>
<evidence type="ECO:0000255" key="1">
    <source>
        <dbReference type="HAMAP-Rule" id="MF_01261"/>
    </source>
</evidence>
<proteinExistence type="inferred from homology"/>